<evidence type="ECO:0000255" key="1">
    <source>
        <dbReference type="HAMAP-Rule" id="MF_01631"/>
    </source>
</evidence>
<accession>B2UD47</accession>
<proteinExistence type="inferred from homology"/>
<dbReference type="EC" id="2.7.7.23" evidence="1"/>
<dbReference type="EC" id="2.3.1.157" evidence="1"/>
<dbReference type="EMBL" id="CP001068">
    <property type="protein sequence ID" value="ACD25226.1"/>
    <property type="molecule type" value="Genomic_DNA"/>
</dbReference>
<dbReference type="SMR" id="B2UD47"/>
<dbReference type="STRING" id="402626.Rpic_0061"/>
<dbReference type="KEGG" id="rpi:Rpic_0061"/>
<dbReference type="eggNOG" id="COG1207">
    <property type="taxonomic scope" value="Bacteria"/>
</dbReference>
<dbReference type="HOGENOM" id="CLU_029499_15_2_4"/>
<dbReference type="UniPathway" id="UPA00113">
    <property type="reaction ID" value="UER00532"/>
</dbReference>
<dbReference type="UniPathway" id="UPA00113">
    <property type="reaction ID" value="UER00533"/>
</dbReference>
<dbReference type="UniPathway" id="UPA00973"/>
<dbReference type="GO" id="GO:0005737">
    <property type="term" value="C:cytoplasm"/>
    <property type="evidence" value="ECO:0007669"/>
    <property type="project" value="UniProtKB-SubCell"/>
</dbReference>
<dbReference type="GO" id="GO:0016020">
    <property type="term" value="C:membrane"/>
    <property type="evidence" value="ECO:0007669"/>
    <property type="project" value="GOC"/>
</dbReference>
<dbReference type="GO" id="GO:0019134">
    <property type="term" value="F:glucosamine-1-phosphate N-acetyltransferase activity"/>
    <property type="evidence" value="ECO:0007669"/>
    <property type="project" value="UniProtKB-UniRule"/>
</dbReference>
<dbReference type="GO" id="GO:0000287">
    <property type="term" value="F:magnesium ion binding"/>
    <property type="evidence" value="ECO:0007669"/>
    <property type="project" value="UniProtKB-UniRule"/>
</dbReference>
<dbReference type="GO" id="GO:0003977">
    <property type="term" value="F:UDP-N-acetylglucosamine diphosphorylase activity"/>
    <property type="evidence" value="ECO:0007669"/>
    <property type="project" value="UniProtKB-UniRule"/>
</dbReference>
<dbReference type="GO" id="GO:0000902">
    <property type="term" value="P:cell morphogenesis"/>
    <property type="evidence" value="ECO:0007669"/>
    <property type="project" value="UniProtKB-UniRule"/>
</dbReference>
<dbReference type="GO" id="GO:0071555">
    <property type="term" value="P:cell wall organization"/>
    <property type="evidence" value="ECO:0007669"/>
    <property type="project" value="UniProtKB-KW"/>
</dbReference>
<dbReference type="GO" id="GO:0009245">
    <property type="term" value="P:lipid A biosynthetic process"/>
    <property type="evidence" value="ECO:0007669"/>
    <property type="project" value="UniProtKB-UniRule"/>
</dbReference>
<dbReference type="GO" id="GO:0009252">
    <property type="term" value="P:peptidoglycan biosynthetic process"/>
    <property type="evidence" value="ECO:0007669"/>
    <property type="project" value="UniProtKB-UniRule"/>
</dbReference>
<dbReference type="GO" id="GO:0008360">
    <property type="term" value="P:regulation of cell shape"/>
    <property type="evidence" value="ECO:0007669"/>
    <property type="project" value="UniProtKB-KW"/>
</dbReference>
<dbReference type="GO" id="GO:0006048">
    <property type="term" value="P:UDP-N-acetylglucosamine biosynthetic process"/>
    <property type="evidence" value="ECO:0007669"/>
    <property type="project" value="UniProtKB-UniPathway"/>
</dbReference>
<dbReference type="CDD" id="cd02540">
    <property type="entry name" value="GT2_GlmU_N_bac"/>
    <property type="match status" value="1"/>
</dbReference>
<dbReference type="CDD" id="cd03353">
    <property type="entry name" value="LbH_GlmU_C"/>
    <property type="match status" value="1"/>
</dbReference>
<dbReference type="Gene3D" id="2.160.10.10">
    <property type="entry name" value="Hexapeptide repeat proteins"/>
    <property type="match status" value="1"/>
</dbReference>
<dbReference type="Gene3D" id="3.90.550.10">
    <property type="entry name" value="Spore Coat Polysaccharide Biosynthesis Protein SpsA, Chain A"/>
    <property type="match status" value="1"/>
</dbReference>
<dbReference type="HAMAP" id="MF_01631">
    <property type="entry name" value="GlmU"/>
    <property type="match status" value="1"/>
</dbReference>
<dbReference type="InterPro" id="IPR005882">
    <property type="entry name" value="Bifunctional_GlmU"/>
</dbReference>
<dbReference type="InterPro" id="IPR050065">
    <property type="entry name" value="GlmU-like"/>
</dbReference>
<dbReference type="InterPro" id="IPR038009">
    <property type="entry name" value="GlmU_C_LbH"/>
</dbReference>
<dbReference type="InterPro" id="IPR001451">
    <property type="entry name" value="Hexapep"/>
</dbReference>
<dbReference type="InterPro" id="IPR025877">
    <property type="entry name" value="MobA-like_NTP_Trfase"/>
</dbReference>
<dbReference type="InterPro" id="IPR029044">
    <property type="entry name" value="Nucleotide-diphossugar_trans"/>
</dbReference>
<dbReference type="InterPro" id="IPR011004">
    <property type="entry name" value="Trimer_LpxA-like_sf"/>
</dbReference>
<dbReference type="NCBIfam" id="TIGR01173">
    <property type="entry name" value="glmU"/>
    <property type="match status" value="1"/>
</dbReference>
<dbReference type="PANTHER" id="PTHR43584:SF3">
    <property type="entry name" value="BIFUNCTIONAL PROTEIN GLMU"/>
    <property type="match status" value="1"/>
</dbReference>
<dbReference type="PANTHER" id="PTHR43584">
    <property type="entry name" value="NUCLEOTIDYL TRANSFERASE"/>
    <property type="match status" value="1"/>
</dbReference>
<dbReference type="Pfam" id="PF00132">
    <property type="entry name" value="Hexapep"/>
    <property type="match status" value="1"/>
</dbReference>
<dbReference type="Pfam" id="PF12804">
    <property type="entry name" value="NTP_transf_3"/>
    <property type="match status" value="1"/>
</dbReference>
<dbReference type="SUPFAM" id="SSF53448">
    <property type="entry name" value="Nucleotide-diphospho-sugar transferases"/>
    <property type="match status" value="1"/>
</dbReference>
<dbReference type="SUPFAM" id="SSF51161">
    <property type="entry name" value="Trimeric LpxA-like enzymes"/>
    <property type="match status" value="1"/>
</dbReference>
<keyword id="KW-0012">Acyltransferase</keyword>
<keyword id="KW-0133">Cell shape</keyword>
<keyword id="KW-0961">Cell wall biogenesis/degradation</keyword>
<keyword id="KW-0963">Cytoplasm</keyword>
<keyword id="KW-0460">Magnesium</keyword>
<keyword id="KW-0479">Metal-binding</keyword>
<keyword id="KW-0511">Multifunctional enzyme</keyword>
<keyword id="KW-0548">Nucleotidyltransferase</keyword>
<keyword id="KW-0573">Peptidoglycan synthesis</keyword>
<keyword id="KW-0677">Repeat</keyword>
<keyword id="KW-0808">Transferase</keyword>
<protein>
    <recommendedName>
        <fullName evidence="1">Bifunctional protein GlmU</fullName>
    </recommendedName>
    <domain>
        <recommendedName>
            <fullName evidence="1">UDP-N-acetylglucosamine pyrophosphorylase</fullName>
            <ecNumber evidence="1">2.7.7.23</ecNumber>
        </recommendedName>
        <alternativeName>
            <fullName evidence="1">N-acetylglucosamine-1-phosphate uridyltransferase</fullName>
        </alternativeName>
    </domain>
    <domain>
        <recommendedName>
            <fullName evidence="1">Glucosamine-1-phosphate N-acetyltransferase</fullName>
            <ecNumber evidence="1">2.3.1.157</ecNumber>
        </recommendedName>
    </domain>
</protein>
<comment type="function">
    <text evidence="1">Catalyzes the last two sequential reactions in the de novo biosynthetic pathway for UDP-N-acetylglucosamine (UDP-GlcNAc). The C-terminal domain catalyzes the transfer of acetyl group from acetyl coenzyme A to glucosamine-1-phosphate (GlcN-1-P) to produce N-acetylglucosamine-1-phosphate (GlcNAc-1-P), which is converted into UDP-GlcNAc by the transfer of uridine 5-monophosphate (from uridine 5-triphosphate), a reaction catalyzed by the N-terminal domain.</text>
</comment>
<comment type="catalytic activity">
    <reaction evidence="1">
        <text>alpha-D-glucosamine 1-phosphate + acetyl-CoA = N-acetyl-alpha-D-glucosamine 1-phosphate + CoA + H(+)</text>
        <dbReference type="Rhea" id="RHEA:13725"/>
        <dbReference type="ChEBI" id="CHEBI:15378"/>
        <dbReference type="ChEBI" id="CHEBI:57287"/>
        <dbReference type="ChEBI" id="CHEBI:57288"/>
        <dbReference type="ChEBI" id="CHEBI:57776"/>
        <dbReference type="ChEBI" id="CHEBI:58516"/>
        <dbReference type="EC" id="2.3.1.157"/>
    </reaction>
</comment>
<comment type="catalytic activity">
    <reaction evidence="1">
        <text>N-acetyl-alpha-D-glucosamine 1-phosphate + UTP + H(+) = UDP-N-acetyl-alpha-D-glucosamine + diphosphate</text>
        <dbReference type="Rhea" id="RHEA:13509"/>
        <dbReference type="ChEBI" id="CHEBI:15378"/>
        <dbReference type="ChEBI" id="CHEBI:33019"/>
        <dbReference type="ChEBI" id="CHEBI:46398"/>
        <dbReference type="ChEBI" id="CHEBI:57705"/>
        <dbReference type="ChEBI" id="CHEBI:57776"/>
        <dbReference type="EC" id="2.7.7.23"/>
    </reaction>
</comment>
<comment type="cofactor">
    <cofactor evidence="1">
        <name>Mg(2+)</name>
        <dbReference type="ChEBI" id="CHEBI:18420"/>
    </cofactor>
    <text evidence="1">Binds 1 Mg(2+) ion per subunit.</text>
</comment>
<comment type="pathway">
    <text evidence="1">Nucleotide-sugar biosynthesis; UDP-N-acetyl-alpha-D-glucosamine biosynthesis; N-acetyl-alpha-D-glucosamine 1-phosphate from alpha-D-glucosamine 6-phosphate (route II): step 2/2.</text>
</comment>
<comment type="pathway">
    <text evidence="1">Nucleotide-sugar biosynthesis; UDP-N-acetyl-alpha-D-glucosamine biosynthesis; UDP-N-acetyl-alpha-D-glucosamine from N-acetyl-alpha-D-glucosamine 1-phosphate: step 1/1.</text>
</comment>
<comment type="pathway">
    <text evidence="1">Bacterial outer membrane biogenesis; LPS lipid A biosynthesis.</text>
</comment>
<comment type="subunit">
    <text evidence="1">Homotrimer.</text>
</comment>
<comment type="subcellular location">
    <subcellularLocation>
        <location evidence="1">Cytoplasm</location>
    </subcellularLocation>
</comment>
<comment type="similarity">
    <text evidence="1">In the N-terminal section; belongs to the N-acetylglucosamine-1-phosphate uridyltransferase family.</text>
</comment>
<comment type="similarity">
    <text evidence="1">In the C-terminal section; belongs to the transferase hexapeptide repeat family.</text>
</comment>
<organism>
    <name type="scientific">Ralstonia pickettii (strain 12J)</name>
    <dbReference type="NCBI Taxonomy" id="402626"/>
    <lineage>
        <taxon>Bacteria</taxon>
        <taxon>Pseudomonadati</taxon>
        <taxon>Pseudomonadota</taxon>
        <taxon>Betaproteobacteria</taxon>
        <taxon>Burkholderiales</taxon>
        <taxon>Burkholderiaceae</taxon>
        <taxon>Ralstonia</taxon>
    </lineage>
</organism>
<sequence length="455" mass="48512">MNIVILAAGMGKRMRSALPKVLHPLTGKPLLAHVIETARTMSPTRLVVVVGHGGDRVREMVGAPDIAFATQDKQLGTGHAVMQAVDQLDESVPTLVLYGDVPLTRAETLSALVGAAGNDHLGVLTVHLGDPTGYGRIVRDAAGRITRIVEQKDANETQLAIHEVNTGILVCPTAKLKSWLATLSNDNAQGEYYLTDVIERAASEGVPITSAHPLAEWETLGVNSKVQLAELERIHQRNLAQQLLEDGVTLIDPARIDVRGKLTCGRDVVIDVNCIFEGDVTLADGVRIGAHTVIRDAAIEAGAEILPFCHIERAKVGADSRIGPYARLRPGTELAEDVHIGNFVEVKNSQIAAHSKANHLAYVGDATVGSRVNIGAGTITCNYDGANKFRTVIEDDAFIGSDTQLVAPVRVGKGATLGAGTTLTKDAPEGKLTVSRARQVTIDSWQRPVKQKKEG</sequence>
<name>GLMU_RALPJ</name>
<reference key="1">
    <citation type="submission" date="2008-05" db="EMBL/GenBank/DDBJ databases">
        <title>Complete sequence of chromosome 1 of Ralstonia pickettii 12J.</title>
        <authorList>
            <person name="Lucas S."/>
            <person name="Copeland A."/>
            <person name="Lapidus A."/>
            <person name="Glavina del Rio T."/>
            <person name="Dalin E."/>
            <person name="Tice H."/>
            <person name="Bruce D."/>
            <person name="Goodwin L."/>
            <person name="Pitluck S."/>
            <person name="Meincke L."/>
            <person name="Brettin T."/>
            <person name="Detter J.C."/>
            <person name="Han C."/>
            <person name="Kuske C.R."/>
            <person name="Schmutz J."/>
            <person name="Larimer F."/>
            <person name="Land M."/>
            <person name="Hauser L."/>
            <person name="Kyrpides N."/>
            <person name="Mikhailova N."/>
            <person name="Marsh T."/>
            <person name="Richardson P."/>
        </authorList>
    </citation>
    <scope>NUCLEOTIDE SEQUENCE [LARGE SCALE GENOMIC DNA]</scope>
    <source>
        <strain>12J</strain>
    </source>
</reference>
<gene>
    <name evidence="1" type="primary">glmU</name>
    <name type="ordered locus">Rpic_0061</name>
</gene>
<feature type="chain" id="PRO_1000186474" description="Bifunctional protein GlmU">
    <location>
        <begin position="1"/>
        <end position="455"/>
    </location>
</feature>
<feature type="region of interest" description="Pyrophosphorylase" evidence="1">
    <location>
        <begin position="1"/>
        <end position="225"/>
    </location>
</feature>
<feature type="region of interest" description="Linker" evidence="1">
    <location>
        <begin position="226"/>
        <end position="246"/>
    </location>
</feature>
<feature type="region of interest" description="N-acetyltransferase" evidence="1">
    <location>
        <begin position="247"/>
        <end position="455"/>
    </location>
</feature>
<feature type="active site" description="Proton acceptor" evidence="1">
    <location>
        <position position="359"/>
    </location>
</feature>
<feature type="binding site" evidence="1">
    <location>
        <begin position="6"/>
        <end position="9"/>
    </location>
    <ligand>
        <name>UDP-N-acetyl-alpha-D-glucosamine</name>
        <dbReference type="ChEBI" id="CHEBI:57705"/>
    </ligand>
</feature>
<feature type="binding site" evidence="1">
    <location>
        <position position="20"/>
    </location>
    <ligand>
        <name>UDP-N-acetyl-alpha-D-glucosamine</name>
        <dbReference type="ChEBI" id="CHEBI:57705"/>
    </ligand>
</feature>
<feature type="binding site" evidence="1">
    <location>
        <position position="71"/>
    </location>
    <ligand>
        <name>UDP-N-acetyl-alpha-D-glucosamine</name>
        <dbReference type="ChEBI" id="CHEBI:57705"/>
    </ligand>
</feature>
<feature type="binding site" evidence="1">
    <location>
        <begin position="76"/>
        <end position="77"/>
    </location>
    <ligand>
        <name>UDP-N-acetyl-alpha-D-glucosamine</name>
        <dbReference type="ChEBI" id="CHEBI:57705"/>
    </ligand>
</feature>
<feature type="binding site" evidence="1">
    <location>
        <begin position="98"/>
        <end position="100"/>
    </location>
    <ligand>
        <name>UDP-N-acetyl-alpha-D-glucosamine</name>
        <dbReference type="ChEBI" id="CHEBI:57705"/>
    </ligand>
</feature>
<feature type="binding site" evidence="1">
    <location>
        <position position="100"/>
    </location>
    <ligand>
        <name>Mg(2+)</name>
        <dbReference type="ChEBI" id="CHEBI:18420"/>
    </ligand>
</feature>
<feature type="binding site" evidence="1">
    <location>
        <position position="135"/>
    </location>
    <ligand>
        <name>UDP-N-acetyl-alpha-D-glucosamine</name>
        <dbReference type="ChEBI" id="CHEBI:57705"/>
    </ligand>
</feature>
<feature type="binding site" evidence="1">
    <location>
        <position position="150"/>
    </location>
    <ligand>
        <name>UDP-N-acetyl-alpha-D-glucosamine</name>
        <dbReference type="ChEBI" id="CHEBI:57705"/>
    </ligand>
</feature>
<feature type="binding site" evidence="1">
    <location>
        <position position="165"/>
    </location>
    <ligand>
        <name>UDP-N-acetyl-alpha-D-glucosamine</name>
        <dbReference type="ChEBI" id="CHEBI:57705"/>
    </ligand>
</feature>
<feature type="binding site" evidence="1">
    <location>
        <position position="223"/>
    </location>
    <ligand>
        <name>Mg(2+)</name>
        <dbReference type="ChEBI" id="CHEBI:18420"/>
    </ligand>
</feature>
<feature type="binding site" evidence="1">
    <location>
        <position position="223"/>
    </location>
    <ligand>
        <name>UDP-N-acetyl-alpha-D-glucosamine</name>
        <dbReference type="ChEBI" id="CHEBI:57705"/>
    </ligand>
</feature>
<feature type="binding site" evidence="1">
    <location>
        <position position="329"/>
    </location>
    <ligand>
        <name>UDP-N-acetyl-alpha-D-glucosamine</name>
        <dbReference type="ChEBI" id="CHEBI:57705"/>
    </ligand>
</feature>
<feature type="binding site" evidence="1">
    <location>
        <position position="347"/>
    </location>
    <ligand>
        <name>UDP-N-acetyl-alpha-D-glucosamine</name>
        <dbReference type="ChEBI" id="CHEBI:57705"/>
    </ligand>
</feature>
<feature type="binding site" evidence="1">
    <location>
        <position position="362"/>
    </location>
    <ligand>
        <name>UDP-N-acetyl-alpha-D-glucosamine</name>
        <dbReference type="ChEBI" id="CHEBI:57705"/>
    </ligand>
</feature>
<feature type="binding site" evidence="1">
    <location>
        <position position="373"/>
    </location>
    <ligand>
        <name>UDP-N-acetyl-alpha-D-glucosamine</name>
        <dbReference type="ChEBI" id="CHEBI:57705"/>
    </ligand>
</feature>
<feature type="binding site" evidence="1">
    <location>
        <position position="376"/>
    </location>
    <ligand>
        <name>acetyl-CoA</name>
        <dbReference type="ChEBI" id="CHEBI:57288"/>
    </ligand>
</feature>
<feature type="binding site" evidence="1">
    <location>
        <begin position="382"/>
        <end position="383"/>
    </location>
    <ligand>
        <name>acetyl-CoA</name>
        <dbReference type="ChEBI" id="CHEBI:57288"/>
    </ligand>
</feature>
<feature type="binding site" evidence="1">
    <location>
        <position position="401"/>
    </location>
    <ligand>
        <name>acetyl-CoA</name>
        <dbReference type="ChEBI" id="CHEBI:57288"/>
    </ligand>
</feature>
<feature type="binding site" evidence="1">
    <location>
        <position position="419"/>
    </location>
    <ligand>
        <name>acetyl-CoA</name>
        <dbReference type="ChEBI" id="CHEBI:57288"/>
    </ligand>
</feature>
<feature type="binding site" evidence="1">
    <location>
        <position position="436"/>
    </location>
    <ligand>
        <name>acetyl-CoA</name>
        <dbReference type="ChEBI" id="CHEBI:57288"/>
    </ligand>
</feature>